<sequence>MRMAVTQNPWQGRVDSGEVGDTTRLFRIVNTLESSEAKTLGGSPVLLGFGCDAGVLRNQGRAGAAHGPDAIRQALANVPAHGLPALYDAGNIACEHGDLESAQLALAGSVHNILSRGGFPLVLGGGHEVAWGTWQGLRAHLDARNDDGRLLIINIDAHFDLRTSRPASSGTPFDQIANACAERGQPFDYVCLGVSRLSNTPALFSRAHALGVSYVEDVDMQERHLASRLAELAARIDATDHVYLTIDLDALPATVMPGVSAPAAYGVPLPVVEEIALLARRSGKLRAADLAEYNPQYDRDNLGARVAARLAWRLLG</sequence>
<name>HUTG_CUPPJ</name>
<accession>Q471H6</accession>
<gene>
    <name evidence="1" type="primary">hutG</name>
    <name type="ordered locus">Reut_A1591</name>
</gene>
<comment type="function">
    <text evidence="1">Catalyzes the conversion of N-formimidoyl-L-glutamate to L-glutamate and formamide.</text>
</comment>
<comment type="catalytic activity">
    <reaction evidence="1">
        <text>N-formimidoyl-L-glutamate + H2O = formamide + L-glutamate</text>
        <dbReference type="Rhea" id="RHEA:22492"/>
        <dbReference type="ChEBI" id="CHEBI:15377"/>
        <dbReference type="ChEBI" id="CHEBI:16397"/>
        <dbReference type="ChEBI" id="CHEBI:29985"/>
        <dbReference type="ChEBI" id="CHEBI:58928"/>
        <dbReference type="EC" id="3.5.3.8"/>
    </reaction>
</comment>
<comment type="cofactor">
    <cofactor evidence="1">
        <name>Mn(2+)</name>
        <dbReference type="ChEBI" id="CHEBI:29035"/>
    </cofactor>
    <text evidence="1">Binds 2 manganese ions per subunit.</text>
</comment>
<comment type="pathway">
    <text evidence="1">Amino-acid degradation; L-histidine degradation into L-glutamate; L-glutamate from N-formimidoyl-L-glutamate (hydrolase route): step 1/1.</text>
</comment>
<comment type="similarity">
    <text evidence="1">Belongs to the arginase family.</text>
</comment>
<keyword id="KW-0369">Histidine metabolism</keyword>
<keyword id="KW-0378">Hydrolase</keyword>
<keyword id="KW-0464">Manganese</keyword>
<keyword id="KW-0479">Metal-binding</keyword>
<organism>
    <name type="scientific">Cupriavidus pinatubonensis (strain JMP 134 / LMG 1197)</name>
    <name type="common">Cupriavidus necator (strain JMP 134)</name>
    <dbReference type="NCBI Taxonomy" id="264198"/>
    <lineage>
        <taxon>Bacteria</taxon>
        <taxon>Pseudomonadati</taxon>
        <taxon>Pseudomonadota</taxon>
        <taxon>Betaproteobacteria</taxon>
        <taxon>Burkholderiales</taxon>
        <taxon>Burkholderiaceae</taxon>
        <taxon>Cupriavidus</taxon>
    </lineage>
</organism>
<feature type="chain" id="PRO_0000258257" description="Formimidoylglutamase">
    <location>
        <begin position="1"/>
        <end position="316"/>
    </location>
</feature>
<feature type="binding site" evidence="1">
    <location>
        <position position="127"/>
    </location>
    <ligand>
        <name>Mn(2+)</name>
        <dbReference type="ChEBI" id="CHEBI:29035"/>
        <label>1</label>
    </ligand>
</feature>
<feature type="binding site" evidence="1">
    <location>
        <position position="156"/>
    </location>
    <ligand>
        <name>Mn(2+)</name>
        <dbReference type="ChEBI" id="CHEBI:29035"/>
        <label>1</label>
    </ligand>
</feature>
<feature type="binding site" evidence="1">
    <location>
        <position position="156"/>
    </location>
    <ligand>
        <name>Mn(2+)</name>
        <dbReference type="ChEBI" id="CHEBI:29035"/>
        <label>2</label>
    </ligand>
</feature>
<feature type="binding site" evidence="1">
    <location>
        <position position="158"/>
    </location>
    <ligand>
        <name>Mn(2+)</name>
        <dbReference type="ChEBI" id="CHEBI:29035"/>
        <label>2</label>
    </ligand>
</feature>
<feature type="binding site" evidence="1">
    <location>
        <position position="160"/>
    </location>
    <ligand>
        <name>Mn(2+)</name>
        <dbReference type="ChEBI" id="CHEBI:29035"/>
        <label>1</label>
    </ligand>
</feature>
<feature type="binding site" evidence="1">
    <location>
        <position position="247"/>
    </location>
    <ligand>
        <name>Mn(2+)</name>
        <dbReference type="ChEBI" id="CHEBI:29035"/>
        <label>1</label>
    </ligand>
</feature>
<feature type="binding site" evidence="1">
    <location>
        <position position="247"/>
    </location>
    <ligand>
        <name>Mn(2+)</name>
        <dbReference type="ChEBI" id="CHEBI:29035"/>
        <label>2</label>
    </ligand>
</feature>
<feature type="binding site" evidence="1">
    <location>
        <position position="249"/>
    </location>
    <ligand>
        <name>Mn(2+)</name>
        <dbReference type="ChEBI" id="CHEBI:29035"/>
        <label>2</label>
    </ligand>
</feature>
<proteinExistence type="inferred from homology"/>
<evidence type="ECO:0000255" key="1">
    <source>
        <dbReference type="HAMAP-Rule" id="MF_00737"/>
    </source>
</evidence>
<reference key="1">
    <citation type="journal article" date="2010" name="PLoS ONE">
        <title>The complete multipartite genome sequence of Cupriavidus necator JMP134, a versatile pollutant degrader.</title>
        <authorList>
            <person name="Lykidis A."/>
            <person name="Perez-Pantoja D."/>
            <person name="Ledger T."/>
            <person name="Mavromatis K."/>
            <person name="Anderson I.J."/>
            <person name="Ivanova N.N."/>
            <person name="Hooper S.D."/>
            <person name="Lapidus A."/>
            <person name="Lucas S."/>
            <person name="Gonzalez B."/>
            <person name="Kyrpides N.C."/>
        </authorList>
    </citation>
    <scope>NUCLEOTIDE SEQUENCE [LARGE SCALE GENOMIC DNA]</scope>
    <source>
        <strain>JMP134 / LMG 1197</strain>
    </source>
</reference>
<protein>
    <recommendedName>
        <fullName evidence="1">Formimidoylglutamase</fullName>
        <ecNumber evidence="1">3.5.3.8</ecNumber>
    </recommendedName>
    <alternativeName>
        <fullName evidence="1">Formiminoglutamase</fullName>
    </alternativeName>
    <alternativeName>
        <fullName evidence="1">Formiminoglutamate hydrolase</fullName>
    </alternativeName>
</protein>
<dbReference type="EC" id="3.5.3.8" evidence="1"/>
<dbReference type="EMBL" id="CP000090">
    <property type="protein sequence ID" value="AAZ60957.1"/>
    <property type="molecule type" value="Genomic_DNA"/>
</dbReference>
<dbReference type="SMR" id="Q471H6"/>
<dbReference type="STRING" id="264198.Reut_A1591"/>
<dbReference type="KEGG" id="reu:Reut_A1591"/>
<dbReference type="eggNOG" id="COG0010">
    <property type="taxonomic scope" value="Bacteria"/>
</dbReference>
<dbReference type="HOGENOM" id="CLU_039478_2_0_4"/>
<dbReference type="OrthoDB" id="9789727at2"/>
<dbReference type="UniPathway" id="UPA00379">
    <property type="reaction ID" value="UER00552"/>
</dbReference>
<dbReference type="GO" id="GO:0008783">
    <property type="term" value="F:agmatinase activity"/>
    <property type="evidence" value="ECO:0007669"/>
    <property type="project" value="TreeGrafter"/>
</dbReference>
<dbReference type="GO" id="GO:0050415">
    <property type="term" value="F:formimidoylglutamase activity"/>
    <property type="evidence" value="ECO:0007669"/>
    <property type="project" value="UniProtKB-UniRule"/>
</dbReference>
<dbReference type="GO" id="GO:0030145">
    <property type="term" value="F:manganese ion binding"/>
    <property type="evidence" value="ECO:0007669"/>
    <property type="project" value="UniProtKB-UniRule"/>
</dbReference>
<dbReference type="GO" id="GO:0019556">
    <property type="term" value="P:L-histidine catabolic process to glutamate and formamide"/>
    <property type="evidence" value="ECO:0007669"/>
    <property type="project" value="UniProtKB-UniPathway"/>
</dbReference>
<dbReference type="GO" id="GO:0019557">
    <property type="term" value="P:L-histidine catabolic process to glutamate and formate"/>
    <property type="evidence" value="ECO:0007669"/>
    <property type="project" value="UniProtKB-UniPathway"/>
</dbReference>
<dbReference type="GO" id="GO:0033389">
    <property type="term" value="P:putrescine biosynthetic process from arginine, via agmatine"/>
    <property type="evidence" value="ECO:0007669"/>
    <property type="project" value="TreeGrafter"/>
</dbReference>
<dbReference type="CDD" id="cd09988">
    <property type="entry name" value="Formimidoylglutamase"/>
    <property type="match status" value="1"/>
</dbReference>
<dbReference type="Gene3D" id="3.40.800.10">
    <property type="entry name" value="Ureohydrolase domain"/>
    <property type="match status" value="1"/>
</dbReference>
<dbReference type="HAMAP" id="MF_00737">
    <property type="entry name" value="Formimidoylglutam"/>
    <property type="match status" value="1"/>
</dbReference>
<dbReference type="InterPro" id="IPR005923">
    <property type="entry name" value="HutG"/>
</dbReference>
<dbReference type="InterPro" id="IPR006035">
    <property type="entry name" value="Ureohydrolase"/>
</dbReference>
<dbReference type="InterPro" id="IPR023696">
    <property type="entry name" value="Ureohydrolase_dom_sf"/>
</dbReference>
<dbReference type="InterPro" id="IPR020855">
    <property type="entry name" value="Ureohydrolase_Mn_BS"/>
</dbReference>
<dbReference type="NCBIfam" id="TIGR01227">
    <property type="entry name" value="hutG"/>
    <property type="match status" value="1"/>
</dbReference>
<dbReference type="PANTHER" id="PTHR11358">
    <property type="entry name" value="ARGINASE/AGMATINASE"/>
    <property type="match status" value="1"/>
</dbReference>
<dbReference type="PANTHER" id="PTHR11358:SF35">
    <property type="entry name" value="FORMIMIDOYLGLUTAMASE"/>
    <property type="match status" value="1"/>
</dbReference>
<dbReference type="Pfam" id="PF00491">
    <property type="entry name" value="Arginase"/>
    <property type="match status" value="1"/>
</dbReference>
<dbReference type="PIRSF" id="PIRSF036979">
    <property type="entry name" value="Arginase"/>
    <property type="match status" value="1"/>
</dbReference>
<dbReference type="SUPFAM" id="SSF52768">
    <property type="entry name" value="Arginase/deacetylase"/>
    <property type="match status" value="1"/>
</dbReference>
<dbReference type="PROSITE" id="PS01053">
    <property type="entry name" value="ARGINASE_1"/>
    <property type="match status" value="1"/>
</dbReference>
<dbReference type="PROSITE" id="PS51409">
    <property type="entry name" value="ARGINASE_2"/>
    <property type="match status" value="1"/>
</dbReference>